<comment type="function">
    <text evidence="3">During larvae development, may be important for neurocranium morphogenesis.</text>
</comment>
<comment type="subcellular location">
    <subcellularLocation>
        <location evidence="1">Nucleus</location>
    </subcellularLocation>
</comment>
<comment type="disruption phenotype">
    <text evidence="3">Morpholino knockdown of the protein causes reduced cranial outgrowth and defects of the cartilaginous elements of the jaw.</text>
</comment>
<comment type="similarity">
    <text evidence="4">Belongs to the distal-less homeobox family.</text>
</comment>
<gene>
    <name type="primary">dlx4b</name>
    <name type="synonym">dlx7</name>
    <name type="ORF">zgc:109858</name>
</gene>
<organism>
    <name type="scientific">Danio rerio</name>
    <name type="common">Zebrafish</name>
    <name type="synonym">Brachydanio rerio</name>
    <dbReference type="NCBI Taxonomy" id="7955"/>
    <lineage>
        <taxon>Eukaryota</taxon>
        <taxon>Metazoa</taxon>
        <taxon>Chordata</taxon>
        <taxon>Craniata</taxon>
        <taxon>Vertebrata</taxon>
        <taxon>Euteleostomi</taxon>
        <taxon>Actinopterygii</taxon>
        <taxon>Neopterygii</taxon>
        <taxon>Teleostei</taxon>
        <taxon>Ostariophysi</taxon>
        <taxon>Cypriniformes</taxon>
        <taxon>Danionidae</taxon>
        <taxon>Danioninae</taxon>
        <taxon>Danio</taxon>
    </lineage>
</organism>
<keyword id="KW-0217">Developmental protein</keyword>
<keyword id="KW-0238">DNA-binding</keyword>
<keyword id="KW-0371">Homeobox</keyword>
<keyword id="KW-0539">Nucleus</keyword>
<keyword id="KW-1185">Reference proteome</keyword>
<proteinExistence type="evidence at transcript level"/>
<evidence type="ECO:0000250" key="1">
    <source>
        <dbReference type="UniProtKB" id="Q92988"/>
    </source>
</evidence>
<evidence type="ECO:0000255" key="2">
    <source>
        <dbReference type="PROSITE-ProRule" id="PRU00108"/>
    </source>
</evidence>
<evidence type="ECO:0000269" key="3">
    <source>
    </source>
</evidence>
<evidence type="ECO:0000305" key="4"/>
<name>DLX4B_DANRE</name>
<reference key="1">
    <citation type="journal article" date="1996" name="Proc. Natl. Acad. Sci. U.S.A.">
        <title>The evolution of the vertebrate Dlx gene family.</title>
        <authorList>
            <person name="Stock D.W."/>
            <person name="Ellies D.L."/>
            <person name="Zhao Z."/>
            <person name="Ekker M."/>
            <person name="Ruddle F.H."/>
            <person name="Weiss K.M."/>
        </authorList>
    </citation>
    <scope>NUCLEOTIDE SEQUENCE [MRNA]</scope>
    <source>
        <tissue>Larva</tissue>
    </source>
</reference>
<reference key="2">
    <citation type="journal article" date="2013" name="Nature">
        <title>The zebrafish reference genome sequence and its relationship to the human genome.</title>
        <authorList>
            <person name="Howe K."/>
            <person name="Clark M.D."/>
            <person name="Torroja C.F."/>
            <person name="Torrance J."/>
            <person name="Berthelot C."/>
            <person name="Muffato M."/>
            <person name="Collins J.E."/>
            <person name="Humphray S."/>
            <person name="McLaren K."/>
            <person name="Matthews L."/>
            <person name="McLaren S."/>
            <person name="Sealy I."/>
            <person name="Caccamo M."/>
            <person name="Churcher C."/>
            <person name="Scott C."/>
            <person name="Barrett J.C."/>
            <person name="Koch R."/>
            <person name="Rauch G.J."/>
            <person name="White S."/>
            <person name="Chow W."/>
            <person name="Kilian B."/>
            <person name="Quintais L.T."/>
            <person name="Guerra-Assuncao J.A."/>
            <person name="Zhou Y."/>
            <person name="Gu Y."/>
            <person name="Yen J."/>
            <person name="Vogel J.H."/>
            <person name="Eyre T."/>
            <person name="Redmond S."/>
            <person name="Banerjee R."/>
            <person name="Chi J."/>
            <person name="Fu B."/>
            <person name="Langley E."/>
            <person name="Maguire S.F."/>
            <person name="Laird G.K."/>
            <person name="Lloyd D."/>
            <person name="Kenyon E."/>
            <person name="Donaldson S."/>
            <person name="Sehra H."/>
            <person name="Almeida-King J."/>
            <person name="Loveland J."/>
            <person name="Trevanion S."/>
            <person name="Jones M."/>
            <person name="Quail M."/>
            <person name="Willey D."/>
            <person name="Hunt A."/>
            <person name="Burton J."/>
            <person name="Sims S."/>
            <person name="McLay K."/>
            <person name="Plumb B."/>
            <person name="Davis J."/>
            <person name="Clee C."/>
            <person name="Oliver K."/>
            <person name="Clark R."/>
            <person name="Riddle C."/>
            <person name="Elliot D."/>
            <person name="Threadgold G."/>
            <person name="Harden G."/>
            <person name="Ware D."/>
            <person name="Begum S."/>
            <person name="Mortimore B."/>
            <person name="Kerry G."/>
            <person name="Heath P."/>
            <person name="Phillimore B."/>
            <person name="Tracey A."/>
            <person name="Corby N."/>
            <person name="Dunn M."/>
            <person name="Johnson C."/>
            <person name="Wood J."/>
            <person name="Clark S."/>
            <person name="Pelan S."/>
            <person name="Griffiths G."/>
            <person name="Smith M."/>
            <person name="Glithero R."/>
            <person name="Howden P."/>
            <person name="Barker N."/>
            <person name="Lloyd C."/>
            <person name="Stevens C."/>
            <person name="Harley J."/>
            <person name="Holt K."/>
            <person name="Panagiotidis G."/>
            <person name="Lovell J."/>
            <person name="Beasley H."/>
            <person name="Henderson C."/>
            <person name="Gordon D."/>
            <person name="Auger K."/>
            <person name="Wright D."/>
            <person name="Collins J."/>
            <person name="Raisen C."/>
            <person name="Dyer L."/>
            <person name="Leung K."/>
            <person name="Robertson L."/>
            <person name="Ambridge K."/>
            <person name="Leongamornlert D."/>
            <person name="McGuire S."/>
            <person name="Gilderthorp R."/>
            <person name="Griffiths C."/>
            <person name="Manthravadi D."/>
            <person name="Nichol S."/>
            <person name="Barker G."/>
            <person name="Whitehead S."/>
            <person name="Kay M."/>
            <person name="Brown J."/>
            <person name="Murnane C."/>
            <person name="Gray E."/>
            <person name="Humphries M."/>
            <person name="Sycamore N."/>
            <person name="Barker D."/>
            <person name="Saunders D."/>
            <person name="Wallis J."/>
            <person name="Babbage A."/>
            <person name="Hammond S."/>
            <person name="Mashreghi-Mohammadi M."/>
            <person name="Barr L."/>
            <person name="Martin S."/>
            <person name="Wray P."/>
            <person name="Ellington A."/>
            <person name="Matthews N."/>
            <person name="Ellwood M."/>
            <person name="Woodmansey R."/>
            <person name="Clark G."/>
            <person name="Cooper J."/>
            <person name="Tromans A."/>
            <person name="Grafham D."/>
            <person name="Skuce C."/>
            <person name="Pandian R."/>
            <person name="Andrews R."/>
            <person name="Harrison E."/>
            <person name="Kimberley A."/>
            <person name="Garnett J."/>
            <person name="Fosker N."/>
            <person name="Hall R."/>
            <person name="Garner P."/>
            <person name="Kelly D."/>
            <person name="Bird C."/>
            <person name="Palmer S."/>
            <person name="Gehring I."/>
            <person name="Berger A."/>
            <person name="Dooley C.M."/>
            <person name="Ersan-Urun Z."/>
            <person name="Eser C."/>
            <person name="Geiger H."/>
            <person name="Geisler M."/>
            <person name="Karotki L."/>
            <person name="Kirn A."/>
            <person name="Konantz J."/>
            <person name="Konantz M."/>
            <person name="Oberlander M."/>
            <person name="Rudolph-Geiger S."/>
            <person name="Teucke M."/>
            <person name="Lanz C."/>
            <person name="Raddatz G."/>
            <person name="Osoegawa K."/>
            <person name="Zhu B."/>
            <person name="Rapp A."/>
            <person name="Widaa S."/>
            <person name="Langford C."/>
            <person name="Yang F."/>
            <person name="Schuster S.C."/>
            <person name="Carter N.P."/>
            <person name="Harrow J."/>
            <person name="Ning Z."/>
            <person name="Herrero J."/>
            <person name="Searle S.M."/>
            <person name="Enright A."/>
            <person name="Geisler R."/>
            <person name="Plasterk R.H."/>
            <person name="Lee C."/>
            <person name="Westerfield M."/>
            <person name="de Jong P.J."/>
            <person name="Zon L.I."/>
            <person name="Postlethwait J.H."/>
            <person name="Nusslein-Volhard C."/>
            <person name="Hubbard T.J."/>
            <person name="Roest Crollius H."/>
            <person name="Rogers J."/>
            <person name="Stemple D.L."/>
        </authorList>
    </citation>
    <scope>NUCLEOTIDE SEQUENCE [LARGE SCALE GENOMIC DNA]</scope>
    <source>
        <strain>Tuebingen</strain>
    </source>
</reference>
<reference key="3">
    <citation type="submission" date="2005-04" db="EMBL/GenBank/DDBJ databases">
        <authorList>
            <consortium name="NIH - Zebrafish Gene Collection (ZGC) project"/>
        </authorList>
    </citation>
    <scope>NUCLEOTIDE SEQUENCE [LARGE SCALE MRNA]</scope>
    <source>
        <tissue>Olfactory epithelium</tissue>
    </source>
</reference>
<reference key="4">
    <citation type="journal article" date="2015" name="Hum. Mol. Genet.">
        <title>DLX4 is associated with orofacial clefting and abnormal jaw development.</title>
        <authorList>
            <person name="Wu D."/>
            <person name="Mandal S."/>
            <person name="Choi A."/>
            <person name="Anderson A."/>
            <person name="Prochazkova M."/>
            <person name="Perry H."/>
            <person name="Gil-Da-Silva-Lopes V.L."/>
            <person name="Lao R."/>
            <person name="Wan E."/>
            <person name="Tang P.L."/>
            <person name="Kwok P.Y."/>
            <person name="Klein O."/>
            <person name="Zhuan B."/>
            <person name="Slavotinek A.M."/>
        </authorList>
    </citation>
    <scope>DISRUPTION PHENOTYPE</scope>
    <scope>FUNCTION</scope>
</reference>
<sequence length="254" mass="28183">MMSMSFMSDTLNSSDPSKSAFLEFGHGLASNQQHLSGFAHNIYPVHGLHSGGHLQHDAPYPSSAPHYSRPLGYAYPGPVSAAAPGAYMPYQPNNHSGALAHTRAENTNHEKPAVIENGEIRLNGKGKKIRKPRTIYSSVQLQALHQRFQQTQYLALPERADLAAKLGLTQTQVKIWFQNKRSKYKKIMKHGSSGPEGELLHTSSSSPCSPGLSQLWEVSMANKVPPMHPSSYMNNYGHWYPPHHQDPVPRPQMM</sequence>
<accession>Q98878</accession>
<accession>B2GRG6</accession>
<accession>F1R2R2</accession>
<accession>Q568U7</accession>
<dbReference type="EMBL" id="U67845">
    <property type="protein sequence ID" value="AAC60028.1"/>
    <property type="molecule type" value="mRNA"/>
</dbReference>
<dbReference type="EMBL" id="CU468219">
    <property type="status" value="NOT_ANNOTATED_CDS"/>
    <property type="molecule type" value="Genomic_DNA"/>
</dbReference>
<dbReference type="EMBL" id="BC092714">
    <property type="protein sequence ID" value="AAH92714.1"/>
    <property type="molecule type" value="mRNA"/>
</dbReference>
<dbReference type="EMBL" id="BC165120">
    <property type="protein sequence ID" value="AAI65120.1"/>
    <property type="molecule type" value="mRNA"/>
</dbReference>
<dbReference type="RefSeq" id="NP_571393.1">
    <property type="nucleotide sequence ID" value="NM_131318.1"/>
</dbReference>
<dbReference type="SMR" id="Q98878"/>
<dbReference type="FunCoup" id="Q98878">
    <property type="interactions" value="16"/>
</dbReference>
<dbReference type="STRING" id="7955.ENSDARP00000096665"/>
<dbReference type="PaxDb" id="7955-ENSDARP00000096665"/>
<dbReference type="Ensembl" id="ENSDART00000105887">
    <property type="protein sequence ID" value="ENSDARP00000096665"/>
    <property type="gene ID" value="ENSDARG00000071560"/>
</dbReference>
<dbReference type="GeneID" id="30581"/>
<dbReference type="KEGG" id="dre:30581"/>
<dbReference type="AGR" id="ZFIN:ZDB-GENE-990415-50"/>
<dbReference type="CTD" id="30581"/>
<dbReference type="ZFIN" id="ZDB-GENE-990415-50">
    <property type="gene designation" value="dlx4b"/>
</dbReference>
<dbReference type="eggNOG" id="KOG0850">
    <property type="taxonomic scope" value="Eukaryota"/>
</dbReference>
<dbReference type="InParanoid" id="Q98878"/>
<dbReference type="OMA" id="MGFMPDS"/>
<dbReference type="OrthoDB" id="6159439at2759"/>
<dbReference type="PhylomeDB" id="Q98878"/>
<dbReference type="TreeFam" id="TF315720"/>
<dbReference type="PRO" id="PR:Q98878"/>
<dbReference type="Proteomes" id="UP000000437">
    <property type="component" value="Chromosome 12"/>
</dbReference>
<dbReference type="Bgee" id="ENSDARG00000071560">
    <property type="expression patterns" value="Expressed in cranial placode and 44 other cell types or tissues"/>
</dbReference>
<dbReference type="GO" id="GO:0005634">
    <property type="term" value="C:nucleus"/>
    <property type="evidence" value="ECO:0007669"/>
    <property type="project" value="UniProtKB-SubCell"/>
</dbReference>
<dbReference type="GO" id="GO:0000981">
    <property type="term" value="F:DNA-binding transcription factor activity, RNA polymerase II-specific"/>
    <property type="evidence" value="ECO:0000318"/>
    <property type="project" value="GO_Central"/>
</dbReference>
<dbReference type="GO" id="GO:0000978">
    <property type="term" value="F:RNA polymerase II cis-regulatory region sequence-specific DNA binding"/>
    <property type="evidence" value="ECO:0000318"/>
    <property type="project" value="GO_Central"/>
</dbReference>
<dbReference type="GO" id="GO:0042667">
    <property type="term" value="P:auditory receptor cell fate specification"/>
    <property type="evidence" value="ECO:0000316"/>
    <property type="project" value="ZFIN"/>
</dbReference>
<dbReference type="GO" id="GO:0043010">
    <property type="term" value="P:camera-type eye development"/>
    <property type="evidence" value="ECO:0000316"/>
    <property type="project" value="ZFIN"/>
</dbReference>
<dbReference type="GO" id="GO:0030154">
    <property type="term" value="P:cell differentiation"/>
    <property type="evidence" value="ECO:0000318"/>
    <property type="project" value="GO_Central"/>
</dbReference>
<dbReference type="GO" id="GO:0048706">
    <property type="term" value="P:embryonic skeletal system development"/>
    <property type="evidence" value="ECO:0000318"/>
    <property type="project" value="GO_Central"/>
</dbReference>
<dbReference type="GO" id="GO:0048703">
    <property type="term" value="P:embryonic viscerocranium morphogenesis"/>
    <property type="evidence" value="ECO:0000315"/>
    <property type="project" value="ZFIN"/>
</dbReference>
<dbReference type="GO" id="GO:0035270">
    <property type="term" value="P:endocrine system development"/>
    <property type="evidence" value="ECO:0000316"/>
    <property type="project" value="ZFIN"/>
</dbReference>
<dbReference type="GO" id="GO:0060119">
    <property type="term" value="P:inner ear receptor cell development"/>
    <property type="evidence" value="ECO:0000316"/>
    <property type="project" value="ZFIN"/>
</dbReference>
<dbReference type="GO" id="GO:0070306">
    <property type="term" value="P:lens fiber cell differentiation"/>
    <property type="evidence" value="ECO:0000316"/>
    <property type="project" value="ZFIN"/>
</dbReference>
<dbReference type="GO" id="GO:0048666">
    <property type="term" value="P:neuron development"/>
    <property type="evidence" value="ECO:0000316"/>
    <property type="project" value="ZFIN"/>
</dbReference>
<dbReference type="GO" id="GO:0030910">
    <property type="term" value="P:olfactory placode formation"/>
    <property type="evidence" value="ECO:0000316"/>
    <property type="project" value="ZFIN"/>
</dbReference>
<dbReference type="GO" id="GO:0043049">
    <property type="term" value="P:otic placode formation"/>
    <property type="evidence" value="ECO:0000316"/>
    <property type="project" value="ZFIN"/>
</dbReference>
<dbReference type="GO" id="GO:0030916">
    <property type="term" value="P:otic vesicle formation"/>
    <property type="evidence" value="ECO:0000316"/>
    <property type="project" value="ZFIN"/>
</dbReference>
<dbReference type="GO" id="GO:0071600">
    <property type="term" value="P:otic vesicle morphogenesis"/>
    <property type="evidence" value="ECO:0000316"/>
    <property type="project" value="ZFIN"/>
</dbReference>
<dbReference type="GO" id="GO:0006357">
    <property type="term" value="P:regulation of transcription by RNA polymerase II"/>
    <property type="evidence" value="ECO:0000318"/>
    <property type="project" value="GO_Central"/>
</dbReference>
<dbReference type="GO" id="GO:0021559">
    <property type="term" value="P:trigeminal nerve development"/>
    <property type="evidence" value="ECO:0000316"/>
    <property type="project" value="ZFIN"/>
</dbReference>
<dbReference type="CDD" id="cd00086">
    <property type="entry name" value="homeodomain"/>
    <property type="match status" value="1"/>
</dbReference>
<dbReference type="FunFam" id="1.10.10.60:FF:000266">
    <property type="entry name" value="Distal-less homeobox 4a"/>
    <property type="match status" value="1"/>
</dbReference>
<dbReference type="Gene3D" id="1.10.10.60">
    <property type="entry name" value="Homeodomain-like"/>
    <property type="match status" value="1"/>
</dbReference>
<dbReference type="InterPro" id="IPR050460">
    <property type="entry name" value="Distal-less_Homeobox_TF"/>
</dbReference>
<dbReference type="InterPro" id="IPR001356">
    <property type="entry name" value="HD"/>
</dbReference>
<dbReference type="InterPro" id="IPR020479">
    <property type="entry name" value="HD_metazoa"/>
</dbReference>
<dbReference type="InterPro" id="IPR017970">
    <property type="entry name" value="Homeobox_CS"/>
</dbReference>
<dbReference type="InterPro" id="IPR009057">
    <property type="entry name" value="Homeodomain-like_sf"/>
</dbReference>
<dbReference type="InterPro" id="IPR000047">
    <property type="entry name" value="HTH_motif"/>
</dbReference>
<dbReference type="PANTHER" id="PTHR24327:SF86">
    <property type="entry name" value="DISTAL-LESS HOMEOBOX 4"/>
    <property type="match status" value="1"/>
</dbReference>
<dbReference type="PANTHER" id="PTHR24327">
    <property type="entry name" value="HOMEOBOX PROTEIN"/>
    <property type="match status" value="1"/>
</dbReference>
<dbReference type="Pfam" id="PF00046">
    <property type="entry name" value="Homeodomain"/>
    <property type="match status" value="1"/>
</dbReference>
<dbReference type="PRINTS" id="PR00024">
    <property type="entry name" value="HOMEOBOX"/>
</dbReference>
<dbReference type="PRINTS" id="PR00031">
    <property type="entry name" value="HTHREPRESSR"/>
</dbReference>
<dbReference type="SMART" id="SM00389">
    <property type="entry name" value="HOX"/>
    <property type="match status" value="1"/>
</dbReference>
<dbReference type="SUPFAM" id="SSF46689">
    <property type="entry name" value="Homeodomain-like"/>
    <property type="match status" value="1"/>
</dbReference>
<dbReference type="PROSITE" id="PS00027">
    <property type="entry name" value="HOMEOBOX_1"/>
    <property type="match status" value="1"/>
</dbReference>
<dbReference type="PROSITE" id="PS50071">
    <property type="entry name" value="HOMEOBOX_2"/>
    <property type="match status" value="1"/>
</dbReference>
<protein>
    <recommendedName>
        <fullName>Homeobox protein Dlx4b</fullName>
    </recommendedName>
    <alternativeName>
        <fullName>DLX-7</fullName>
    </alternativeName>
    <alternativeName>
        <fullName>Distal-less homeobox protein 4b</fullName>
    </alternativeName>
</protein>
<feature type="chain" id="PRO_0000049051" description="Homeobox protein Dlx4b">
    <location>
        <begin position="1"/>
        <end position="254"/>
    </location>
</feature>
<feature type="DNA-binding region" description="Homeobox" evidence="2">
    <location>
        <begin position="129"/>
        <end position="188"/>
    </location>
</feature>
<feature type="sequence conflict" description="In Ref. 1; AAC60028 and 3; AAH92714/AAI65120." evidence="4" ref="1 3">
    <original>N</original>
    <variation>D</variation>
    <location>
        <position position="106"/>
    </location>
</feature>